<protein>
    <recommendedName>
        <fullName evidence="1">Nicotinate-nucleotide--dimethylbenzimidazole phosphoribosyltransferase</fullName>
        <shortName evidence="1">NN:DBI PRT</shortName>
        <ecNumber evidence="1">2.4.2.21</ecNumber>
    </recommendedName>
    <alternativeName>
        <fullName evidence="1">N(1)-alpha-phosphoribosyltransferase</fullName>
    </alternativeName>
</protein>
<dbReference type="EC" id="2.4.2.21" evidence="1"/>
<dbReference type="EMBL" id="CP000612">
    <property type="protein sequence ID" value="ABO51232.1"/>
    <property type="molecule type" value="Genomic_DNA"/>
</dbReference>
<dbReference type="RefSeq" id="WP_011879029.1">
    <property type="nucleotide sequence ID" value="NC_009253.1"/>
</dbReference>
<dbReference type="SMR" id="A4J829"/>
<dbReference type="STRING" id="349161.Dred_2728"/>
<dbReference type="KEGG" id="drm:Dred_2728"/>
<dbReference type="eggNOG" id="COG2038">
    <property type="taxonomic scope" value="Bacteria"/>
</dbReference>
<dbReference type="HOGENOM" id="CLU_002982_0_0_9"/>
<dbReference type="OrthoDB" id="9781491at2"/>
<dbReference type="UniPathway" id="UPA00061">
    <property type="reaction ID" value="UER00516"/>
</dbReference>
<dbReference type="Proteomes" id="UP000001556">
    <property type="component" value="Chromosome"/>
</dbReference>
<dbReference type="GO" id="GO:0008939">
    <property type="term" value="F:nicotinate-nucleotide-dimethylbenzimidazole phosphoribosyltransferase activity"/>
    <property type="evidence" value="ECO:0007669"/>
    <property type="project" value="UniProtKB-UniRule"/>
</dbReference>
<dbReference type="GO" id="GO:0009236">
    <property type="term" value="P:cobalamin biosynthetic process"/>
    <property type="evidence" value="ECO:0007669"/>
    <property type="project" value="UniProtKB-KW"/>
</dbReference>
<dbReference type="CDD" id="cd02439">
    <property type="entry name" value="DMB-PRT_CobT"/>
    <property type="match status" value="1"/>
</dbReference>
<dbReference type="FunFam" id="3.40.50.10210:FF:000001">
    <property type="entry name" value="Nicotinate-nucleotide--dimethylbenzimidazole phosphoribosyltransferase"/>
    <property type="match status" value="1"/>
</dbReference>
<dbReference type="Gene3D" id="1.10.1610.10">
    <property type="match status" value="1"/>
</dbReference>
<dbReference type="Gene3D" id="3.40.50.10210">
    <property type="match status" value="1"/>
</dbReference>
<dbReference type="HAMAP" id="MF_00230">
    <property type="entry name" value="CobT"/>
    <property type="match status" value="1"/>
</dbReference>
<dbReference type="InterPro" id="IPR003200">
    <property type="entry name" value="Nict_dMeBzImd_PRibTrfase"/>
</dbReference>
<dbReference type="InterPro" id="IPR017846">
    <property type="entry name" value="Nict_dMeBzImd_PRibTrfase_bact"/>
</dbReference>
<dbReference type="InterPro" id="IPR023195">
    <property type="entry name" value="Nict_dMeBzImd_PRibTrfase_N"/>
</dbReference>
<dbReference type="InterPro" id="IPR036087">
    <property type="entry name" value="Nict_dMeBzImd_PRibTrfase_sf"/>
</dbReference>
<dbReference type="NCBIfam" id="TIGR03160">
    <property type="entry name" value="cobT_DBIPRT"/>
    <property type="match status" value="1"/>
</dbReference>
<dbReference type="NCBIfam" id="NF000996">
    <property type="entry name" value="PRK00105.1"/>
    <property type="match status" value="1"/>
</dbReference>
<dbReference type="PANTHER" id="PTHR43463">
    <property type="entry name" value="NICOTINATE-NUCLEOTIDE--DIMETHYLBENZIMIDAZOLE PHOSPHORIBOSYLTRANSFERASE"/>
    <property type="match status" value="1"/>
</dbReference>
<dbReference type="PANTHER" id="PTHR43463:SF1">
    <property type="entry name" value="NICOTINATE-NUCLEOTIDE--DIMETHYLBENZIMIDAZOLE PHOSPHORIBOSYLTRANSFERASE"/>
    <property type="match status" value="1"/>
</dbReference>
<dbReference type="Pfam" id="PF02277">
    <property type="entry name" value="DBI_PRT"/>
    <property type="match status" value="1"/>
</dbReference>
<dbReference type="SUPFAM" id="SSF52733">
    <property type="entry name" value="Nicotinate mononucleotide:5,6-dimethylbenzimidazole phosphoribosyltransferase (CobT)"/>
    <property type="match status" value="1"/>
</dbReference>
<comment type="function">
    <text evidence="1">Catalyzes the synthesis of alpha-ribazole-5'-phosphate from nicotinate mononucleotide (NAMN) and 5,6-dimethylbenzimidazole (DMB).</text>
</comment>
<comment type="catalytic activity">
    <reaction evidence="1">
        <text>5,6-dimethylbenzimidazole + nicotinate beta-D-ribonucleotide = alpha-ribazole 5'-phosphate + nicotinate + H(+)</text>
        <dbReference type="Rhea" id="RHEA:11196"/>
        <dbReference type="ChEBI" id="CHEBI:15378"/>
        <dbReference type="ChEBI" id="CHEBI:15890"/>
        <dbReference type="ChEBI" id="CHEBI:32544"/>
        <dbReference type="ChEBI" id="CHEBI:57502"/>
        <dbReference type="ChEBI" id="CHEBI:57918"/>
        <dbReference type="EC" id="2.4.2.21"/>
    </reaction>
</comment>
<comment type="pathway">
    <text evidence="1">Nucleoside biosynthesis; alpha-ribazole biosynthesis; alpha-ribazole from 5,6-dimethylbenzimidazole: step 1/2.</text>
</comment>
<comment type="similarity">
    <text evidence="1">Belongs to the CobT family.</text>
</comment>
<sequence>MTLLAETLSKIQAPDQTCVEQAKQRLDSLTKPPGSLGILEDIAWRLAGIQRVPLPQLPREKVSLVLAGDHGVVAEGVSAFPQEVTPQMIFNFLQGGAGINVLARQAGAKVVVADIGVAGPPLEKTGLVSCRVKSGTDNFAVGPAMSREEAVKSIEAGISLLQQQVKERPALVAIGEMGIGNTTPSAAILAAFTGMPVEEITGRGTGIDNQRLQHKIAVIKRGLEVNRPDANDGLDVLSKVGGLEIGGMAGIILGCAAEGIPVVLDGFISGAAALVAQSLAPLSREYMFASHGSVEPGHRIMLEKLGLKPMLQMEMRLGEGTGAALAYPIIESAVRIINEMATFAEAGVSKG</sequence>
<keyword id="KW-0169">Cobalamin biosynthesis</keyword>
<keyword id="KW-0328">Glycosyltransferase</keyword>
<keyword id="KW-1185">Reference proteome</keyword>
<keyword id="KW-0808">Transferase</keyword>
<proteinExistence type="inferred from homology"/>
<accession>A4J829</accession>
<organism>
    <name type="scientific">Desulforamulus reducens (strain ATCC BAA-1160 / DSM 100696 / MI-1)</name>
    <name type="common">Desulfotomaculum reducens</name>
    <dbReference type="NCBI Taxonomy" id="349161"/>
    <lineage>
        <taxon>Bacteria</taxon>
        <taxon>Bacillati</taxon>
        <taxon>Bacillota</taxon>
        <taxon>Clostridia</taxon>
        <taxon>Eubacteriales</taxon>
        <taxon>Peptococcaceae</taxon>
        <taxon>Desulforamulus</taxon>
    </lineage>
</organism>
<feature type="chain" id="PRO_1000071789" description="Nicotinate-nucleotide--dimethylbenzimidazole phosphoribosyltransferase">
    <location>
        <begin position="1"/>
        <end position="351"/>
    </location>
</feature>
<feature type="active site" description="Proton acceptor" evidence="1">
    <location>
        <position position="319"/>
    </location>
</feature>
<reference key="1">
    <citation type="submission" date="2007-03" db="EMBL/GenBank/DDBJ databases">
        <title>Complete sequence of Desulfotomaculum reducens MI-1.</title>
        <authorList>
            <consortium name="US DOE Joint Genome Institute"/>
            <person name="Copeland A."/>
            <person name="Lucas S."/>
            <person name="Lapidus A."/>
            <person name="Barry K."/>
            <person name="Detter J.C."/>
            <person name="Glavina del Rio T."/>
            <person name="Hammon N."/>
            <person name="Israni S."/>
            <person name="Dalin E."/>
            <person name="Tice H."/>
            <person name="Pitluck S."/>
            <person name="Sims D."/>
            <person name="Brettin T."/>
            <person name="Bruce D."/>
            <person name="Han C."/>
            <person name="Tapia R."/>
            <person name="Schmutz J."/>
            <person name="Larimer F."/>
            <person name="Land M."/>
            <person name="Hauser L."/>
            <person name="Kyrpides N."/>
            <person name="Kim E."/>
            <person name="Tebo B.M."/>
            <person name="Richardson P."/>
        </authorList>
    </citation>
    <scope>NUCLEOTIDE SEQUENCE [LARGE SCALE GENOMIC DNA]</scope>
    <source>
        <strain>ATCC BAA-1160 / DSM 100696 / MI-1</strain>
    </source>
</reference>
<name>COBT_DESRM</name>
<gene>
    <name evidence="1" type="primary">cobT</name>
    <name type="ordered locus">Dred_2728</name>
</gene>
<evidence type="ECO:0000255" key="1">
    <source>
        <dbReference type="HAMAP-Rule" id="MF_00230"/>
    </source>
</evidence>